<protein>
    <recommendedName>
        <fullName evidence="4">Dermatoxin-J2</fullName>
        <shortName evidence="4">DRT-J2</shortName>
    </recommendedName>
</protein>
<reference key="1">
    <citation type="journal article" date="2011" name="Toxicon">
        <title>Peptidomic dissection of the skin secretion of Phasmahyla jandaia (Bokermann and Sazima, 1978) (Anura, Hylidae, Phyllomedusinae).</title>
        <authorList>
            <person name="Rates B."/>
            <person name="Silva L.P."/>
            <person name="Ireno I.C."/>
            <person name="Leite F.S."/>
            <person name="Borges M.H."/>
            <person name="Bloch C. Jr."/>
            <person name="De Lima M.E."/>
            <person name="Pimenta A.M."/>
        </authorList>
    </citation>
    <scope>PROTEIN SEQUENCE</scope>
    <scope>SUBCELLULAR LOCATION</scope>
    <scope>TISSUE SPECIFICITY</scope>
    <scope>MASS SPECTROMETRY</scope>
    <scope>AMIDATION AT GLN-32</scope>
    <source>
        <tissue>Skin secretion</tissue>
    </source>
</reference>
<comment type="function">
    <text evidence="1">Antimicrobial peptide.</text>
</comment>
<comment type="subcellular location">
    <subcellularLocation>
        <location evidence="3">Secreted</location>
    </subcellularLocation>
</comment>
<comment type="tissue specificity">
    <text evidence="3">Expressed by the skin glands.</text>
</comment>
<comment type="mass spectrometry"/>
<comment type="similarity">
    <text evidence="2">Belongs to the frog skin active peptide (FSAP) family. Dermatoxin subfamily.</text>
</comment>
<evidence type="ECO:0000250" key="1">
    <source>
        <dbReference type="UniProtKB" id="P84928"/>
    </source>
</evidence>
<evidence type="ECO:0000255" key="2"/>
<evidence type="ECO:0000269" key="3">
    <source>
    </source>
</evidence>
<evidence type="ECO:0000303" key="4">
    <source>
    </source>
</evidence>
<feature type="peptide" id="PRO_0000404608" description="Dermatoxin-J2" evidence="3">
    <location>
        <begin position="1"/>
        <end position="32"/>
    </location>
</feature>
<feature type="modified residue" description="Glutamine amide" evidence="3">
    <location>
        <position position="32"/>
    </location>
</feature>
<feature type="unsure residue" description="L or I" evidence="3">
    <location>
        <position position="2"/>
    </location>
</feature>
<feature type="unsure residue" description="L or I" evidence="3">
    <location>
        <position position="6"/>
    </location>
</feature>
<feature type="unsure residue" description="K or Q" evidence="3">
    <location>
        <position position="7"/>
    </location>
</feature>
<feature type="unsure residue" description="K or Q" evidence="3">
    <location>
        <position position="11"/>
    </location>
</feature>
<feature type="unsure residue" description="L or I" evidence="3">
    <location>
        <position position="13"/>
    </location>
</feature>
<feature type="unsure residue" description="K or Q" evidence="3">
    <location>
        <position position="18"/>
    </location>
</feature>
<feature type="unsure residue" description="Q or K" evidence="3">
    <location>
        <position position="23"/>
    </location>
</feature>
<feature type="unsure residue" description="L or I" evidence="3">
    <location>
        <position position="27"/>
    </location>
</feature>
<feature type="unsure residue" description="L or I" evidence="3">
    <location>
        <position position="28"/>
    </location>
</feature>
<feature type="unsure residue" description="Q or K" evidence="3">
    <location>
        <position position="29"/>
    </location>
</feature>
<feature type="unsure residue" description="Q or K" evidence="3">
    <location>
        <position position="32"/>
    </location>
</feature>
<name>DRT2_PHAJA</name>
<dbReference type="GO" id="GO:0005576">
    <property type="term" value="C:extracellular region"/>
    <property type="evidence" value="ECO:0007669"/>
    <property type="project" value="UniProtKB-SubCell"/>
</dbReference>
<dbReference type="GO" id="GO:0006952">
    <property type="term" value="P:defense response"/>
    <property type="evidence" value="ECO:0007669"/>
    <property type="project" value="UniProtKB-KW"/>
</dbReference>
<sequence>SLGGFLKGVGKALAGVGKMVADQFGNLLQAGQ</sequence>
<proteinExistence type="evidence at protein level"/>
<organism>
    <name type="scientific">Phasmahyla jandaia</name>
    <name type="common">Jandaia leaf frog</name>
    <name type="synonym">Phyllomedusa jandaia</name>
    <dbReference type="NCBI Taxonomy" id="762504"/>
    <lineage>
        <taxon>Eukaryota</taxon>
        <taxon>Metazoa</taxon>
        <taxon>Chordata</taxon>
        <taxon>Craniata</taxon>
        <taxon>Vertebrata</taxon>
        <taxon>Euteleostomi</taxon>
        <taxon>Amphibia</taxon>
        <taxon>Batrachia</taxon>
        <taxon>Anura</taxon>
        <taxon>Neobatrachia</taxon>
        <taxon>Hyloidea</taxon>
        <taxon>Hylidae</taxon>
        <taxon>Phyllomedusinae</taxon>
        <taxon>Phasmahyla</taxon>
    </lineage>
</organism>
<accession>P86622</accession>
<keyword id="KW-0027">Amidation</keyword>
<keyword id="KW-0878">Amphibian defense peptide</keyword>
<keyword id="KW-0929">Antimicrobial</keyword>
<keyword id="KW-0903">Direct protein sequencing</keyword>
<keyword id="KW-0964">Secreted</keyword>